<comment type="function">
    <text evidence="1">Involved in protein export. Acts as a chaperone by maintaining the newly synthesized protein in an open conformation. Functions as a peptidyl-prolyl cis-trans isomerase.</text>
</comment>
<comment type="catalytic activity">
    <reaction evidence="1">
        <text>[protein]-peptidylproline (omega=180) = [protein]-peptidylproline (omega=0)</text>
        <dbReference type="Rhea" id="RHEA:16237"/>
        <dbReference type="Rhea" id="RHEA-COMP:10747"/>
        <dbReference type="Rhea" id="RHEA-COMP:10748"/>
        <dbReference type="ChEBI" id="CHEBI:83833"/>
        <dbReference type="ChEBI" id="CHEBI:83834"/>
        <dbReference type="EC" id="5.2.1.8"/>
    </reaction>
</comment>
<comment type="subcellular location">
    <subcellularLocation>
        <location>Cytoplasm</location>
    </subcellularLocation>
    <text evidence="1">About half TF is bound to the ribosome near the polypeptide exit tunnel while the other half is free in the cytoplasm.</text>
</comment>
<comment type="domain">
    <text evidence="1">Consists of 3 domains; the N-terminus binds the ribosome, the middle domain has PPIase activity, while the C-terminus has intrinsic chaperone activity on its own.</text>
</comment>
<comment type="similarity">
    <text evidence="1">Belongs to the FKBP-type PPIase family. Tig subfamily.</text>
</comment>
<sequence>MTATWEKKEGNEGLLTVTVPAEKVNKALDQAFKKVVKQINVPGFRKGKVPRPIFEQRFGVEALYQDAIDILLPDAYGEAIDETDIKPVAQPEVSVTQIEKGKDFIFEATVTVEPEVKLGDYKGLEIEKQETELSDDELQEAIDHSLGHLAEMVVKEDGVVENGDTVNIDFSGSVDGEEFEGGQAEGYDLEIGSGSFIPGFEEQLEGMKVDEEKDVVVTFPEEYHAEELAGKEATFKTKVNEIKFKEVPELTDEIANELDAEANTVDEYKENLRKRLAEQKATDAENVEKEEAITKATDNTTIDIPEAMVNTELDRMVSEFAQRIQQQGLDLQTYFQISGQDETQLREQMKDDAEQRVKTNLTLTAIAEAEKIEATDEDIDKELEKMSKQFNISVEDIKNTLGNTDIIKNDVRIQKVIDLLRDNAKFVEGTKED</sequence>
<proteinExistence type="inferred from homology"/>
<name>TIG_STAA2</name>
<feature type="chain" id="PRO_1000079060" description="Trigger factor">
    <location>
        <begin position="1"/>
        <end position="433"/>
    </location>
</feature>
<feature type="domain" description="PPIase FKBP-type" evidence="1">
    <location>
        <begin position="163"/>
        <end position="248"/>
    </location>
</feature>
<reference key="1">
    <citation type="submission" date="2007-06" db="EMBL/GenBank/DDBJ databases">
        <title>Complete sequence of chromosome of Staphylococcus aureus subsp. aureus JH1.</title>
        <authorList>
            <consortium name="US DOE Joint Genome Institute"/>
            <person name="Copeland A."/>
            <person name="Lucas S."/>
            <person name="Lapidus A."/>
            <person name="Barry K."/>
            <person name="Detter J.C."/>
            <person name="Glavina del Rio T."/>
            <person name="Hammon N."/>
            <person name="Israni S."/>
            <person name="Dalin E."/>
            <person name="Tice H."/>
            <person name="Pitluck S."/>
            <person name="Chain P."/>
            <person name="Malfatti S."/>
            <person name="Shin M."/>
            <person name="Vergez L."/>
            <person name="Schmutz J."/>
            <person name="Larimer F."/>
            <person name="Land M."/>
            <person name="Hauser L."/>
            <person name="Kyrpides N."/>
            <person name="Ivanova N."/>
            <person name="Tomasz A."/>
            <person name="Richardson P."/>
        </authorList>
    </citation>
    <scope>NUCLEOTIDE SEQUENCE [LARGE SCALE GENOMIC DNA]</scope>
    <source>
        <strain>JH1</strain>
    </source>
</reference>
<keyword id="KW-0131">Cell cycle</keyword>
<keyword id="KW-0132">Cell division</keyword>
<keyword id="KW-0143">Chaperone</keyword>
<keyword id="KW-0963">Cytoplasm</keyword>
<keyword id="KW-0413">Isomerase</keyword>
<keyword id="KW-0697">Rotamase</keyword>
<protein>
    <recommendedName>
        <fullName evidence="1">Trigger factor</fullName>
        <shortName evidence="1">TF</shortName>
        <ecNumber evidence="1">5.2.1.8</ecNumber>
    </recommendedName>
    <alternativeName>
        <fullName evidence="1">PPIase</fullName>
    </alternativeName>
</protein>
<organism>
    <name type="scientific">Staphylococcus aureus (strain JH1)</name>
    <dbReference type="NCBI Taxonomy" id="359787"/>
    <lineage>
        <taxon>Bacteria</taxon>
        <taxon>Bacillati</taxon>
        <taxon>Bacillota</taxon>
        <taxon>Bacilli</taxon>
        <taxon>Bacillales</taxon>
        <taxon>Staphylococcaceae</taxon>
        <taxon>Staphylococcus</taxon>
    </lineage>
</organism>
<dbReference type="EC" id="5.2.1.8" evidence="1"/>
<dbReference type="EMBL" id="CP000736">
    <property type="protein sequence ID" value="ABR52611.1"/>
    <property type="molecule type" value="Genomic_DNA"/>
</dbReference>
<dbReference type="SMR" id="A6U2E3"/>
<dbReference type="KEGG" id="sah:SaurJH1_1767"/>
<dbReference type="HOGENOM" id="CLU_033058_3_2_9"/>
<dbReference type="GO" id="GO:0005737">
    <property type="term" value="C:cytoplasm"/>
    <property type="evidence" value="ECO:0007669"/>
    <property type="project" value="UniProtKB-SubCell"/>
</dbReference>
<dbReference type="GO" id="GO:0003755">
    <property type="term" value="F:peptidyl-prolyl cis-trans isomerase activity"/>
    <property type="evidence" value="ECO:0007669"/>
    <property type="project" value="UniProtKB-UniRule"/>
</dbReference>
<dbReference type="GO" id="GO:0044183">
    <property type="term" value="F:protein folding chaperone"/>
    <property type="evidence" value="ECO:0007669"/>
    <property type="project" value="TreeGrafter"/>
</dbReference>
<dbReference type="GO" id="GO:0043022">
    <property type="term" value="F:ribosome binding"/>
    <property type="evidence" value="ECO:0007669"/>
    <property type="project" value="TreeGrafter"/>
</dbReference>
<dbReference type="GO" id="GO:0051083">
    <property type="term" value="P:'de novo' cotranslational protein folding"/>
    <property type="evidence" value="ECO:0007669"/>
    <property type="project" value="TreeGrafter"/>
</dbReference>
<dbReference type="GO" id="GO:0051301">
    <property type="term" value="P:cell division"/>
    <property type="evidence" value="ECO:0007669"/>
    <property type="project" value="UniProtKB-KW"/>
</dbReference>
<dbReference type="GO" id="GO:0061077">
    <property type="term" value="P:chaperone-mediated protein folding"/>
    <property type="evidence" value="ECO:0007669"/>
    <property type="project" value="TreeGrafter"/>
</dbReference>
<dbReference type="GO" id="GO:0015031">
    <property type="term" value="P:protein transport"/>
    <property type="evidence" value="ECO:0007669"/>
    <property type="project" value="UniProtKB-UniRule"/>
</dbReference>
<dbReference type="GO" id="GO:0043335">
    <property type="term" value="P:protein unfolding"/>
    <property type="evidence" value="ECO:0007669"/>
    <property type="project" value="TreeGrafter"/>
</dbReference>
<dbReference type="FunFam" id="3.10.50.40:FF:000001">
    <property type="entry name" value="Trigger factor"/>
    <property type="match status" value="1"/>
</dbReference>
<dbReference type="FunFam" id="3.30.70.1050:FF:000002">
    <property type="entry name" value="Trigger factor"/>
    <property type="match status" value="1"/>
</dbReference>
<dbReference type="Gene3D" id="3.10.50.40">
    <property type="match status" value="1"/>
</dbReference>
<dbReference type="Gene3D" id="3.30.70.1050">
    <property type="entry name" value="Trigger factor ribosome-binding domain"/>
    <property type="match status" value="1"/>
</dbReference>
<dbReference type="Gene3D" id="1.10.3120.10">
    <property type="entry name" value="Trigger factor, C-terminal domain"/>
    <property type="match status" value="1"/>
</dbReference>
<dbReference type="HAMAP" id="MF_00303">
    <property type="entry name" value="Trigger_factor_Tig"/>
    <property type="match status" value="1"/>
</dbReference>
<dbReference type="InterPro" id="IPR046357">
    <property type="entry name" value="PPIase_dom_sf"/>
</dbReference>
<dbReference type="InterPro" id="IPR001179">
    <property type="entry name" value="PPIase_FKBP_dom"/>
</dbReference>
<dbReference type="InterPro" id="IPR005215">
    <property type="entry name" value="Trig_fac"/>
</dbReference>
<dbReference type="InterPro" id="IPR008880">
    <property type="entry name" value="Trigger_fac_C"/>
</dbReference>
<dbReference type="InterPro" id="IPR037041">
    <property type="entry name" value="Trigger_fac_C_sf"/>
</dbReference>
<dbReference type="InterPro" id="IPR008881">
    <property type="entry name" value="Trigger_fac_ribosome-bd_bac"/>
</dbReference>
<dbReference type="InterPro" id="IPR036611">
    <property type="entry name" value="Trigger_fac_ribosome-bd_sf"/>
</dbReference>
<dbReference type="InterPro" id="IPR027304">
    <property type="entry name" value="Trigger_fact/SurA_dom_sf"/>
</dbReference>
<dbReference type="NCBIfam" id="TIGR00115">
    <property type="entry name" value="tig"/>
    <property type="match status" value="1"/>
</dbReference>
<dbReference type="PANTHER" id="PTHR30560">
    <property type="entry name" value="TRIGGER FACTOR CHAPERONE AND PEPTIDYL-PROLYL CIS/TRANS ISOMERASE"/>
    <property type="match status" value="1"/>
</dbReference>
<dbReference type="PANTHER" id="PTHR30560:SF3">
    <property type="entry name" value="TRIGGER FACTOR-LIKE PROTEIN TIG, CHLOROPLASTIC"/>
    <property type="match status" value="1"/>
</dbReference>
<dbReference type="Pfam" id="PF00254">
    <property type="entry name" value="FKBP_C"/>
    <property type="match status" value="1"/>
</dbReference>
<dbReference type="Pfam" id="PF05698">
    <property type="entry name" value="Trigger_C"/>
    <property type="match status" value="1"/>
</dbReference>
<dbReference type="Pfam" id="PF05697">
    <property type="entry name" value="Trigger_N"/>
    <property type="match status" value="1"/>
</dbReference>
<dbReference type="PIRSF" id="PIRSF003095">
    <property type="entry name" value="Trigger_factor"/>
    <property type="match status" value="1"/>
</dbReference>
<dbReference type="SUPFAM" id="SSF54534">
    <property type="entry name" value="FKBP-like"/>
    <property type="match status" value="1"/>
</dbReference>
<dbReference type="SUPFAM" id="SSF109998">
    <property type="entry name" value="Triger factor/SurA peptide-binding domain-like"/>
    <property type="match status" value="1"/>
</dbReference>
<dbReference type="SUPFAM" id="SSF102735">
    <property type="entry name" value="Trigger factor ribosome-binding domain"/>
    <property type="match status" value="1"/>
</dbReference>
<dbReference type="PROSITE" id="PS50059">
    <property type="entry name" value="FKBP_PPIASE"/>
    <property type="match status" value="1"/>
</dbReference>
<evidence type="ECO:0000255" key="1">
    <source>
        <dbReference type="HAMAP-Rule" id="MF_00303"/>
    </source>
</evidence>
<gene>
    <name evidence="1" type="primary">tig</name>
    <name type="ordered locus">SaurJH1_1767</name>
</gene>
<accession>A6U2E3</accession>